<keyword id="KW-0963">Cytoplasm</keyword>
<keyword id="KW-0255">Endonuclease</keyword>
<keyword id="KW-0378">Hydrolase</keyword>
<keyword id="KW-0460">Magnesium</keyword>
<keyword id="KW-0479">Metal-binding</keyword>
<keyword id="KW-0540">Nuclease</keyword>
<keyword id="KW-1185">Reference proteome</keyword>
<keyword id="KW-0690">Ribosome biogenesis</keyword>
<keyword id="KW-0694">RNA-binding</keyword>
<keyword id="KW-0698">rRNA processing</keyword>
<keyword id="KW-0699">rRNA-binding</keyword>
<accession>Q1WV74</accession>
<sequence length="185" mass="20830">MKIKEVIVVEGKDDTKRIQMAVNADTLETRGSAISDETLDQIEDLYDKRGVIVFTDPDFSGEKIRKIITEAIPGVKHAFLTKHDAAPSHKGSLGVEHASPEAIREALAHLYTEVPDGEPLISREDLAVAGLTSGPQAKEYRRRLGEYLRIGYTNGKQLYKRLKLFQITPDEFKKALEYIKNEDNY</sequence>
<organism>
    <name type="scientific">Ligilactobacillus salivarius (strain UCC118)</name>
    <name type="common">Lactobacillus salivarius</name>
    <dbReference type="NCBI Taxonomy" id="362948"/>
    <lineage>
        <taxon>Bacteria</taxon>
        <taxon>Bacillati</taxon>
        <taxon>Bacillota</taxon>
        <taxon>Bacilli</taxon>
        <taxon>Lactobacillales</taxon>
        <taxon>Lactobacillaceae</taxon>
        <taxon>Ligilactobacillus</taxon>
    </lineage>
</organism>
<dbReference type="EC" id="3.1.26.8" evidence="1"/>
<dbReference type="EMBL" id="CP000233">
    <property type="protein sequence ID" value="ABD99043.1"/>
    <property type="molecule type" value="Genomic_DNA"/>
</dbReference>
<dbReference type="RefSeq" id="WP_011475601.1">
    <property type="nucleotide sequence ID" value="NC_007929.1"/>
</dbReference>
<dbReference type="RefSeq" id="YP_535126.1">
    <property type="nucleotide sequence ID" value="NC_007929.1"/>
</dbReference>
<dbReference type="SMR" id="Q1WV74"/>
<dbReference type="STRING" id="362948.LSL_0228"/>
<dbReference type="KEGG" id="lsl:LSL_0228"/>
<dbReference type="PATRIC" id="fig|362948.14.peg.312"/>
<dbReference type="HOGENOM" id="CLU_109405_0_0_9"/>
<dbReference type="OrthoDB" id="9791329at2"/>
<dbReference type="Proteomes" id="UP000006559">
    <property type="component" value="Chromosome"/>
</dbReference>
<dbReference type="GO" id="GO:0005737">
    <property type="term" value="C:cytoplasm"/>
    <property type="evidence" value="ECO:0007669"/>
    <property type="project" value="UniProtKB-SubCell"/>
</dbReference>
<dbReference type="GO" id="GO:0046872">
    <property type="term" value="F:metal ion binding"/>
    <property type="evidence" value="ECO:0007669"/>
    <property type="project" value="UniProtKB-KW"/>
</dbReference>
<dbReference type="GO" id="GO:0043822">
    <property type="term" value="F:ribonuclease M5 activity"/>
    <property type="evidence" value="ECO:0007669"/>
    <property type="project" value="UniProtKB-UniRule"/>
</dbReference>
<dbReference type="GO" id="GO:0019843">
    <property type="term" value="F:rRNA binding"/>
    <property type="evidence" value="ECO:0007669"/>
    <property type="project" value="UniProtKB-KW"/>
</dbReference>
<dbReference type="GO" id="GO:0006364">
    <property type="term" value="P:rRNA processing"/>
    <property type="evidence" value="ECO:0007669"/>
    <property type="project" value="UniProtKB-UniRule"/>
</dbReference>
<dbReference type="CDD" id="cd01027">
    <property type="entry name" value="TOPRIM_RNase_M5_like"/>
    <property type="match status" value="1"/>
</dbReference>
<dbReference type="FunFam" id="3.40.1360.10:FF:000006">
    <property type="entry name" value="Ribonuclease M5"/>
    <property type="match status" value="1"/>
</dbReference>
<dbReference type="Gene3D" id="3.40.1360.10">
    <property type="match status" value="1"/>
</dbReference>
<dbReference type="HAMAP" id="MF_01469">
    <property type="entry name" value="RNase_M5"/>
    <property type="match status" value="1"/>
</dbReference>
<dbReference type="InterPro" id="IPR004466">
    <property type="entry name" value="RNase_M5"/>
</dbReference>
<dbReference type="InterPro" id="IPR025156">
    <property type="entry name" value="RNase_M5_C"/>
</dbReference>
<dbReference type="InterPro" id="IPR006171">
    <property type="entry name" value="TOPRIM_dom"/>
</dbReference>
<dbReference type="InterPro" id="IPR034141">
    <property type="entry name" value="TOPRIM_RNase_M5-like"/>
</dbReference>
<dbReference type="NCBIfam" id="TIGR00334">
    <property type="entry name" value="5S_RNA_mat_M5"/>
    <property type="match status" value="1"/>
</dbReference>
<dbReference type="PANTHER" id="PTHR39156">
    <property type="entry name" value="RIBONUCLEASE M5"/>
    <property type="match status" value="1"/>
</dbReference>
<dbReference type="PANTHER" id="PTHR39156:SF1">
    <property type="entry name" value="RIBONUCLEASE M5"/>
    <property type="match status" value="1"/>
</dbReference>
<dbReference type="Pfam" id="PF13331">
    <property type="entry name" value="DUF4093"/>
    <property type="match status" value="1"/>
</dbReference>
<dbReference type="Pfam" id="PF01751">
    <property type="entry name" value="Toprim"/>
    <property type="match status" value="1"/>
</dbReference>
<dbReference type="SMART" id="SM00493">
    <property type="entry name" value="TOPRIM"/>
    <property type="match status" value="1"/>
</dbReference>
<dbReference type="SUPFAM" id="SSF110455">
    <property type="entry name" value="Toprim domain"/>
    <property type="match status" value="1"/>
</dbReference>
<dbReference type="PROSITE" id="PS50880">
    <property type="entry name" value="TOPRIM"/>
    <property type="match status" value="1"/>
</dbReference>
<gene>
    <name evidence="1" type="primary">rnmV1</name>
    <name type="ordered locus">LSL_0228</name>
</gene>
<comment type="function">
    <text evidence="1">Required for correct processing of both the 5' and 3' ends of 5S rRNA precursor. Cleaves both sides of a double-stranded region yielding mature 5S rRNA in one step.</text>
</comment>
<comment type="catalytic activity">
    <reaction evidence="1">
        <text>Endonucleolytic cleavage of RNA, removing 21 and 42 nucleotides, respectively, from the 5'- and 3'-termini of a 5S-rRNA precursor.</text>
        <dbReference type="EC" id="3.1.26.8"/>
    </reaction>
</comment>
<comment type="cofactor">
    <cofactor evidence="1">
        <name>Mg(2+)</name>
        <dbReference type="ChEBI" id="CHEBI:18420"/>
    </cofactor>
    <text evidence="1">Binds two Mg(2+) per subunit.</text>
</comment>
<comment type="subcellular location">
    <subcellularLocation>
        <location evidence="1">Cytoplasm</location>
    </subcellularLocation>
</comment>
<comment type="similarity">
    <text evidence="1">Belongs to the ribonuclease M5 family.</text>
</comment>
<evidence type="ECO:0000255" key="1">
    <source>
        <dbReference type="HAMAP-Rule" id="MF_01469"/>
    </source>
</evidence>
<proteinExistence type="inferred from homology"/>
<protein>
    <recommendedName>
        <fullName evidence="1">Ribonuclease M5 1</fullName>
        <ecNumber evidence="1">3.1.26.8</ecNumber>
    </recommendedName>
    <alternativeName>
        <fullName evidence="1">RNase M5 1</fullName>
    </alternativeName>
    <alternativeName>
        <fullName evidence="1">Ribosomal RNA terminal maturase M5 1</fullName>
    </alternativeName>
</protein>
<feature type="chain" id="PRO_0000416752" description="Ribonuclease M5 1">
    <location>
        <begin position="1"/>
        <end position="185"/>
    </location>
</feature>
<feature type="domain" description="Toprim" evidence="1">
    <location>
        <begin position="4"/>
        <end position="87"/>
    </location>
</feature>
<feature type="binding site" evidence="1">
    <location>
        <position position="10"/>
    </location>
    <ligand>
        <name>Mg(2+)</name>
        <dbReference type="ChEBI" id="CHEBI:18420"/>
        <label>1</label>
        <note>catalytic</note>
    </ligand>
</feature>
<feature type="binding site" evidence="1">
    <location>
        <position position="56"/>
    </location>
    <ligand>
        <name>Mg(2+)</name>
        <dbReference type="ChEBI" id="CHEBI:18420"/>
        <label>1</label>
        <note>catalytic</note>
    </ligand>
</feature>
<feature type="binding site" evidence="1">
    <location>
        <position position="56"/>
    </location>
    <ligand>
        <name>Mg(2+)</name>
        <dbReference type="ChEBI" id="CHEBI:18420"/>
        <label>2</label>
    </ligand>
</feature>
<feature type="binding site" evidence="1">
    <location>
        <position position="58"/>
    </location>
    <ligand>
        <name>Mg(2+)</name>
        <dbReference type="ChEBI" id="CHEBI:18420"/>
        <label>2</label>
    </ligand>
</feature>
<reference key="1">
    <citation type="journal article" date="2006" name="Proc. Natl. Acad. Sci. U.S.A.">
        <title>Multireplicon genome architecture of Lactobacillus salivarius.</title>
        <authorList>
            <person name="Claesson M.J."/>
            <person name="Li Y."/>
            <person name="Leahy S."/>
            <person name="Canchaya C."/>
            <person name="van Pijkeren J.P."/>
            <person name="Cerdeno-Tarraga A.M."/>
            <person name="Parkhill J."/>
            <person name="Flynn S."/>
            <person name="O'Sullivan G.C."/>
            <person name="Collins J.K."/>
            <person name="Higgins D."/>
            <person name="Shanahan F."/>
            <person name="Fitzgerald G.F."/>
            <person name="van Sinderen D."/>
            <person name="O'Toole P.W."/>
        </authorList>
    </citation>
    <scope>NUCLEOTIDE SEQUENCE [LARGE SCALE GENOMIC DNA]</scope>
    <source>
        <strain>UCC118</strain>
    </source>
</reference>
<name>RNM51_LIGS1</name>